<reference key="1">
    <citation type="journal article" date="2010" name="Appl. Environ. Microbiol.">
        <title>The genome sequence of Psychrobacter arcticus 273-4, a psychroactive Siberian permafrost bacterium, reveals mechanisms for adaptation to low-temperature growth.</title>
        <authorList>
            <person name="Ayala-del-Rio H.L."/>
            <person name="Chain P.S."/>
            <person name="Grzymski J.J."/>
            <person name="Ponder M.A."/>
            <person name="Ivanova N."/>
            <person name="Bergholz P.W."/>
            <person name="Di Bartolo G."/>
            <person name="Hauser L."/>
            <person name="Land M."/>
            <person name="Bakermans C."/>
            <person name="Rodrigues D."/>
            <person name="Klappenbach J."/>
            <person name="Zarka D."/>
            <person name="Larimer F."/>
            <person name="Richardson P."/>
            <person name="Murray A."/>
            <person name="Thomashow M."/>
            <person name="Tiedje J.M."/>
        </authorList>
    </citation>
    <scope>NUCLEOTIDE SEQUENCE [LARGE SCALE GENOMIC DNA]</scope>
    <source>
        <strain>DSM 17307 / VKM B-2377 / 273-4</strain>
    </source>
</reference>
<evidence type="ECO:0000255" key="1">
    <source>
        <dbReference type="HAMAP-Rule" id="MF_00362"/>
    </source>
</evidence>
<evidence type="ECO:0000305" key="2"/>
<accession>Q4FQH1</accession>
<keyword id="KW-1185">Reference proteome</keyword>
<keyword id="KW-0687">Ribonucleoprotein</keyword>
<keyword id="KW-0689">Ribosomal protein</keyword>
<keyword id="KW-0694">RNA-binding</keyword>
<keyword id="KW-0699">rRNA-binding</keyword>
<sequence length="175" mass="18811">MALTLEQKQQVVAEVSEVAANAYSAVAAEYHGIGVAKLTKLREQAREKGVVLKVVKNTLAKRAFEGTKFESMSDRMTGPLLLAFSMEDLGSAARVVFDFSKDNKALETKLVSVGGVVYGPEELERVSKLPTRDEAISILMATMNAPVTKLVQTMNAVPGKLVRTVAAIKDAKEAA</sequence>
<name>RL10_PSYA2</name>
<gene>
    <name evidence="1" type="primary">rplJ</name>
    <name type="ordered locus">Psyc_1889</name>
</gene>
<protein>
    <recommendedName>
        <fullName evidence="1">Large ribosomal subunit protein uL10</fullName>
    </recommendedName>
    <alternativeName>
        <fullName evidence="2">50S ribosomal protein L10</fullName>
    </alternativeName>
</protein>
<feature type="chain" id="PRO_0000234877" description="Large ribosomal subunit protein uL10">
    <location>
        <begin position="1"/>
        <end position="175"/>
    </location>
</feature>
<comment type="function">
    <text evidence="1">Forms part of the ribosomal stalk, playing a central role in the interaction of the ribosome with GTP-bound translation factors.</text>
</comment>
<comment type="subunit">
    <text evidence="1">Part of the ribosomal stalk of the 50S ribosomal subunit. The N-terminus interacts with L11 and the large rRNA to form the base of the stalk. The C-terminus forms an elongated spine to which L12 dimers bind in a sequential fashion forming a multimeric L10(L12)X complex.</text>
</comment>
<comment type="similarity">
    <text evidence="1">Belongs to the universal ribosomal protein uL10 family.</text>
</comment>
<dbReference type="EMBL" id="CP000082">
    <property type="protein sequence ID" value="AAZ19737.1"/>
    <property type="molecule type" value="Genomic_DNA"/>
</dbReference>
<dbReference type="RefSeq" id="WP_011281147.1">
    <property type="nucleotide sequence ID" value="NC_007204.1"/>
</dbReference>
<dbReference type="SMR" id="Q4FQH1"/>
<dbReference type="STRING" id="259536.Psyc_1889"/>
<dbReference type="KEGG" id="par:Psyc_1889"/>
<dbReference type="eggNOG" id="COG0244">
    <property type="taxonomic scope" value="Bacteria"/>
</dbReference>
<dbReference type="HOGENOM" id="CLU_092227_0_1_6"/>
<dbReference type="OrthoDB" id="9808307at2"/>
<dbReference type="Proteomes" id="UP000000546">
    <property type="component" value="Chromosome"/>
</dbReference>
<dbReference type="GO" id="GO:1990904">
    <property type="term" value="C:ribonucleoprotein complex"/>
    <property type="evidence" value="ECO:0007669"/>
    <property type="project" value="UniProtKB-KW"/>
</dbReference>
<dbReference type="GO" id="GO:0005840">
    <property type="term" value="C:ribosome"/>
    <property type="evidence" value="ECO:0007669"/>
    <property type="project" value="UniProtKB-KW"/>
</dbReference>
<dbReference type="GO" id="GO:0070180">
    <property type="term" value="F:large ribosomal subunit rRNA binding"/>
    <property type="evidence" value="ECO:0007669"/>
    <property type="project" value="UniProtKB-UniRule"/>
</dbReference>
<dbReference type="GO" id="GO:0006412">
    <property type="term" value="P:translation"/>
    <property type="evidence" value="ECO:0007669"/>
    <property type="project" value="UniProtKB-UniRule"/>
</dbReference>
<dbReference type="CDD" id="cd05797">
    <property type="entry name" value="Ribosomal_L10"/>
    <property type="match status" value="1"/>
</dbReference>
<dbReference type="Gene3D" id="3.30.70.1730">
    <property type="match status" value="1"/>
</dbReference>
<dbReference type="Gene3D" id="6.10.250.2350">
    <property type="match status" value="1"/>
</dbReference>
<dbReference type="HAMAP" id="MF_00362">
    <property type="entry name" value="Ribosomal_uL10"/>
    <property type="match status" value="1"/>
</dbReference>
<dbReference type="InterPro" id="IPR001790">
    <property type="entry name" value="Ribosomal_uL10"/>
</dbReference>
<dbReference type="InterPro" id="IPR043141">
    <property type="entry name" value="Ribosomal_uL10-like_sf"/>
</dbReference>
<dbReference type="InterPro" id="IPR022973">
    <property type="entry name" value="Ribosomal_uL10_bac"/>
</dbReference>
<dbReference type="InterPro" id="IPR047865">
    <property type="entry name" value="Ribosomal_uL10_bac_type"/>
</dbReference>
<dbReference type="NCBIfam" id="NF000955">
    <property type="entry name" value="PRK00099.1-1"/>
    <property type="match status" value="1"/>
</dbReference>
<dbReference type="PANTHER" id="PTHR11560">
    <property type="entry name" value="39S RIBOSOMAL PROTEIN L10, MITOCHONDRIAL"/>
    <property type="match status" value="1"/>
</dbReference>
<dbReference type="Pfam" id="PF00466">
    <property type="entry name" value="Ribosomal_L10"/>
    <property type="match status" value="1"/>
</dbReference>
<dbReference type="SUPFAM" id="SSF160369">
    <property type="entry name" value="Ribosomal protein L10-like"/>
    <property type="match status" value="1"/>
</dbReference>
<organism>
    <name type="scientific">Psychrobacter arcticus (strain DSM 17307 / VKM B-2377 / 273-4)</name>
    <dbReference type="NCBI Taxonomy" id="259536"/>
    <lineage>
        <taxon>Bacteria</taxon>
        <taxon>Pseudomonadati</taxon>
        <taxon>Pseudomonadota</taxon>
        <taxon>Gammaproteobacteria</taxon>
        <taxon>Moraxellales</taxon>
        <taxon>Moraxellaceae</taxon>
        <taxon>Psychrobacter</taxon>
    </lineage>
</organism>
<proteinExistence type="inferred from homology"/>